<name>RS21A_NOSS1</name>
<proteinExistence type="inferred from homology"/>
<organism>
    <name type="scientific">Nostoc sp. (strain PCC 7120 / SAG 25.82 / UTEX 2576)</name>
    <dbReference type="NCBI Taxonomy" id="103690"/>
    <lineage>
        <taxon>Bacteria</taxon>
        <taxon>Bacillati</taxon>
        <taxon>Cyanobacteriota</taxon>
        <taxon>Cyanophyceae</taxon>
        <taxon>Nostocales</taxon>
        <taxon>Nostocaceae</taxon>
        <taxon>Nostoc</taxon>
    </lineage>
</organism>
<evidence type="ECO:0000255" key="1">
    <source>
        <dbReference type="HAMAP-Rule" id="MF_00358"/>
    </source>
</evidence>
<evidence type="ECO:0000256" key="2">
    <source>
        <dbReference type="SAM" id="MobiDB-lite"/>
    </source>
</evidence>
<evidence type="ECO:0000305" key="3"/>
<dbReference type="EMBL" id="BA000019">
    <property type="protein sequence ID" value="BAB72699.1"/>
    <property type="molecule type" value="Genomic_DNA"/>
</dbReference>
<dbReference type="PIR" id="AD1899">
    <property type="entry name" value="AD1899"/>
</dbReference>
<dbReference type="SMR" id="P0A4B7"/>
<dbReference type="STRING" id="103690.gene:10492753"/>
<dbReference type="KEGG" id="ana:asr0742"/>
<dbReference type="eggNOG" id="COG0828">
    <property type="taxonomic scope" value="Bacteria"/>
</dbReference>
<dbReference type="OrthoDB" id="9799244at2"/>
<dbReference type="Proteomes" id="UP000002483">
    <property type="component" value="Chromosome"/>
</dbReference>
<dbReference type="GO" id="GO:1990904">
    <property type="term" value="C:ribonucleoprotein complex"/>
    <property type="evidence" value="ECO:0007669"/>
    <property type="project" value="UniProtKB-KW"/>
</dbReference>
<dbReference type="GO" id="GO:0005840">
    <property type="term" value="C:ribosome"/>
    <property type="evidence" value="ECO:0007669"/>
    <property type="project" value="UniProtKB-KW"/>
</dbReference>
<dbReference type="GO" id="GO:0003735">
    <property type="term" value="F:structural constituent of ribosome"/>
    <property type="evidence" value="ECO:0007669"/>
    <property type="project" value="InterPro"/>
</dbReference>
<dbReference type="GO" id="GO:0006412">
    <property type="term" value="P:translation"/>
    <property type="evidence" value="ECO:0007669"/>
    <property type="project" value="UniProtKB-UniRule"/>
</dbReference>
<dbReference type="Gene3D" id="1.20.5.1150">
    <property type="entry name" value="Ribosomal protein S8"/>
    <property type="match status" value="1"/>
</dbReference>
<dbReference type="HAMAP" id="MF_00358">
    <property type="entry name" value="Ribosomal_bS21"/>
    <property type="match status" value="1"/>
</dbReference>
<dbReference type="InterPro" id="IPR001911">
    <property type="entry name" value="Ribosomal_bS21"/>
</dbReference>
<dbReference type="InterPro" id="IPR018278">
    <property type="entry name" value="Ribosomal_bS21_CS"/>
</dbReference>
<dbReference type="InterPro" id="IPR038380">
    <property type="entry name" value="Ribosomal_bS21_sf"/>
</dbReference>
<dbReference type="NCBIfam" id="TIGR00030">
    <property type="entry name" value="S21p"/>
    <property type="match status" value="1"/>
</dbReference>
<dbReference type="PANTHER" id="PTHR21109">
    <property type="entry name" value="MITOCHONDRIAL 28S RIBOSOMAL PROTEIN S21"/>
    <property type="match status" value="1"/>
</dbReference>
<dbReference type="PANTHER" id="PTHR21109:SF0">
    <property type="entry name" value="SMALL RIBOSOMAL SUBUNIT PROTEIN BS21M"/>
    <property type="match status" value="1"/>
</dbReference>
<dbReference type="Pfam" id="PF01165">
    <property type="entry name" value="Ribosomal_S21"/>
    <property type="match status" value="1"/>
</dbReference>
<dbReference type="PRINTS" id="PR00976">
    <property type="entry name" value="RIBOSOMALS21"/>
</dbReference>
<dbReference type="PROSITE" id="PS01181">
    <property type="entry name" value="RIBOSOMAL_S21"/>
    <property type="match status" value="1"/>
</dbReference>
<protein>
    <recommendedName>
        <fullName evidence="1">Small ribosomal subunit protein bS21A</fullName>
    </recommendedName>
    <alternativeName>
        <fullName evidence="3">30S ribosomal protein S21 1</fullName>
    </alternativeName>
</protein>
<gene>
    <name type="primary">rpsU1</name>
    <name type="synonym">rps21</name>
    <name type="ordered locus">asr0742</name>
</gene>
<accession>P0A4B7</accession>
<accession>P49224</accession>
<keyword id="KW-1185">Reference proteome</keyword>
<keyword id="KW-0687">Ribonucleoprotein</keyword>
<keyword id="KW-0689">Ribosomal protein</keyword>
<comment type="similarity">
    <text evidence="3">Belongs to the bacterial ribosomal protein bS21 family.</text>
</comment>
<sequence>MTQIVVGENEHIESALRRFKREVSKAGIFQDMRKHRHFETPIEKSKRKKLALHKQSKRRFRT</sequence>
<reference key="1">
    <citation type="journal article" date="2001" name="DNA Res.">
        <title>Complete genomic sequence of the filamentous nitrogen-fixing cyanobacterium Anabaena sp. strain PCC 7120.</title>
        <authorList>
            <person name="Kaneko T."/>
            <person name="Nakamura Y."/>
            <person name="Wolk C.P."/>
            <person name="Kuritz T."/>
            <person name="Sasamoto S."/>
            <person name="Watanabe A."/>
            <person name="Iriguchi M."/>
            <person name="Ishikawa A."/>
            <person name="Kawashima K."/>
            <person name="Kimura T."/>
            <person name="Kishida Y."/>
            <person name="Kohara M."/>
            <person name="Matsumoto M."/>
            <person name="Matsuno A."/>
            <person name="Muraki A."/>
            <person name="Nakazaki N."/>
            <person name="Shimpo S."/>
            <person name="Sugimoto M."/>
            <person name="Takazawa M."/>
            <person name="Yamada M."/>
            <person name="Yasuda M."/>
            <person name="Tabata S."/>
        </authorList>
    </citation>
    <scope>NUCLEOTIDE SEQUENCE [LARGE SCALE GENOMIC DNA]</scope>
    <source>
        <strain>PCC 7120 / SAG 25.82 / UTEX 2576</strain>
    </source>
</reference>
<feature type="chain" id="PRO_0000178286" description="Small ribosomal subunit protein bS21A">
    <location>
        <begin position="1"/>
        <end position="62"/>
    </location>
</feature>
<feature type="region of interest" description="Disordered" evidence="2">
    <location>
        <begin position="43"/>
        <end position="62"/>
    </location>
</feature>
<feature type="compositionally biased region" description="Basic residues" evidence="2">
    <location>
        <begin position="45"/>
        <end position="62"/>
    </location>
</feature>